<sequence>MRTLCSLLLIGCLLFSYDTPVVGFLRRSVSGFQECHSKGGYCYRYYCPRPHRRLGSCYPYAANCCRRRR</sequence>
<comment type="function">
    <text evidence="1">Has antibacterial activity.</text>
</comment>
<comment type="subcellular location">
    <subcellularLocation>
        <location evidence="1">Secreted</location>
    </subcellularLocation>
</comment>
<comment type="similarity">
    <text evidence="3">Belongs to the beta-defensin family.</text>
</comment>
<gene>
    <name type="primary">Defb11</name>
</gene>
<organism>
    <name type="scientific">Rattus norvegicus</name>
    <name type="common">Rat</name>
    <dbReference type="NCBI Taxonomy" id="10116"/>
    <lineage>
        <taxon>Eukaryota</taxon>
        <taxon>Metazoa</taxon>
        <taxon>Chordata</taxon>
        <taxon>Craniata</taxon>
        <taxon>Vertebrata</taxon>
        <taxon>Euteleostomi</taxon>
        <taxon>Mammalia</taxon>
        <taxon>Eutheria</taxon>
        <taxon>Euarchontoglires</taxon>
        <taxon>Glires</taxon>
        <taxon>Rodentia</taxon>
        <taxon>Myomorpha</taxon>
        <taxon>Muroidea</taxon>
        <taxon>Muridae</taxon>
        <taxon>Murinae</taxon>
        <taxon>Rattus</taxon>
    </lineage>
</organism>
<keyword id="KW-0044">Antibiotic</keyword>
<keyword id="KW-0929">Antimicrobial</keyword>
<keyword id="KW-0211">Defensin</keyword>
<keyword id="KW-1015">Disulfide bond</keyword>
<keyword id="KW-1185">Reference proteome</keyword>
<keyword id="KW-0964">Secreted</keyword>
<keyword id="KW-0732">Signal</keyword>
<dbReference type="EMBL" id="AY621343">
    <property type="protein sequence ID" value="AAT51882.1"/>
    <property type="molecule type" value="mRNA"/>
</dbReference>
<dbReference type="RefSeq" id="NP_001032594.1">
    <property type="nucleotide sequence ID" value="NM_001037505.2"/>
</dbReference>
<dbReference type="FunCoup" id="Q32ZI0">
    <property type="interactions" value="14"/>
</dbReference>
<dbReference type="STRING" id="10116.ENSRNOP00000054871"/>
<dbReference type="TCDB" id="1.C.85.1.7">
    <property type="family name" value="the pore-forming Beta-defensin (Beta-defensin) family"/>
</dbReference>
<dbReference type="PaxDb" id="10116-ENSRNOP00000054871"/>
<dbReference type="Ensembl" id="ENSRNOT00000058063.2">
    <property type="protein sequence ID" value="ENSRNOP00000054871.1"/>
    <property type="gene ID" value="ENSRNOG00000038151.2"/>
</dbReference>
<dbReference type="GeneID" id="641630"/>
<dbReference type="KEGG" id="rno:641630"/>
<dbReference type="UCSC" id="RGD:1564032">
    <property type="organism name" value="rat"/>
</dbReference>
<dbReference type="AGR" id="RGD:1564032"/>
<dbReference type="CTD" id="246081"/>
<dbReference type="RGD" id="1564032">
    <property type="gene designation" value="Defb11"/>
</dbReference>
<dbReference type="GeneTree" id="ENSGT00940000165558"/>
<dbReference type="HOGENOM" id="CLU_189296_1_0_1"/>
<dbReference type="InParanoid" id="Q32ZI0"/>
<dbReference type="OMA" id="VSEMERC"/>
<dbReference type="PRO" id="PR:Q32ZI0"/>
<dbReference type="Proteomes" id="UP000002494">
    <property type="component" value="Chromosome 16"/>
</dbReference>
<dbReference type="Bgee" id="ENSRNOG00000038151">
    <property type="expression patterns" value="Expressed in kidney and 3 other cell types or tissues"/>
</dbReference>
<dbReference type="GO" id="GO:0005615">
    <property type="term" value="C:extracellular space"/>
    <property type="evidence" value="ECO:0000318"/>
    <property type="project" value="GO_Central"/>
</dbReference>
<dbReference type="GO" id="GO:0031731">
    <property type="term" value="F:CCR6 chemokine receptor binding"/>
    <property type="evidence" value="ECO:0000318"/>
    <property type="project" value="GO_Central"/>
</dbReference>
<dbReference type="GO" id="GO:0050829">
    <property type="term" value="P:defense response to Gram-negative bacterium"/>
    <property type="evidence" value="ECO:0000318"/>
    <property type="project" value="GO_Central"/>
</dbReference>
<dbReference type="GO" id="GO:0050830">
    <property type="term" value="P:defense response to Gram-positive bacterium"/>
    <property type="evidence" value="ECO:0000318"/>
    <property type="project" value="GO_Central"/>
</dbReference>
<dbReference type="GO" id="GO:0002227">
    <property type="term" value="P:innate immune response in mucosa"/>
    <property type="evidence" value="ECO:0000318"/>
    <property type="project" value="GO_Central"/>
</dbReference>
<dbReference type="Gene3D" id="3.10.360.10">
    <property type="entry name" value="Antimicrobial Peptide, Beta-defensin 2, Chain A"/>
    <property type="match status" value="1"/>
</dbReference>
<dbReference type="InterPro" id="IPR001855">
    <property type="entry name" value="Defensin_beta-like"/>
</dbReference>
<dbReference type="PANTHER" id="PTHR21388:SF4">
    <property type="entry name" value="BETA-DEFENSIN 10-RELATED"/>
    <property type="match status" value="1"/>
</dbReference>
<dbReference type="PANTHER" id="PTHR21388">
    <property type="entry name" value="BETA-DEFENSIN-RELATED"/>
    <property type="match status" value="1"/>
</dbReference>
<dbReference type="Pfam" id="PF00711">
    <property type="entry name" value="Defensin_beta"/>
    <property type="match status" value="1"/>
</dbReference>
<dbReference type="SUPFAM" id="SSF57392">
    <property type="entry name" value="Defensin-like"/>
    <property type="match status" value="1"/>
</dbReference>
<feature type="signal peptide" evidence="2">
    <location>
        <begin position="1"/>
        <end position="23"/>
    </location>
</feature>
<feature type="chain" id="PRO_0000352696" description="Beta-defensin 11">
    <location>
        <begin position="24"/>
        <end position="69"/>
    </location>
</feature>
<feature type="disulfide bond" evidence="1">
    <location>
        <begin position="35"/>
        <end position="64"/>
    </location>
</feature>
<feature type="disulfide bond" evidence="1">
    <location>
        <begin position="42"/>
        <end position="57"/>
    </location>
</feature>
<feature type="disulfide bond" evidence="1">
    <location>
        <begin position="47"/>
        <end position="65"/>
    </location>
</feature>
<evidence type="ECO:0000250" key="1"/>
<evidence type="ECO:0000255" key="2"/>
<evidence type="ECO:0000305" key="3"/>
<reference key="1">
    <citation type="journal article" date="2005" name="Physiol. Genomics">
        <title>Cross-species analysis of the mammalian beta-defensin gene family: presence of syntenic gene clusters and preferential expression in the male reproductive tract.</title>
        <authorList>
            <person name="Patil A.A."/>
            <person name="Cai Y."/>
            <person name="Sang Y."/>
            <person name="Blecha F."/>
            <person name="Zhang G."/>
        </authorList>
    </citation>
    <scope>NUCLEOTIDE SEQUENCE [MRNA]</scope>
</reference>
<protein>
    <recommendedName>
        <fullName>Beta-defensin 11</fullName>
        <shortName>BD-11</shortName>
    </recommendedName>
    <alternativeName>
        <fullName>Defensin, beta 11</fullName>
    </alternativeName>
</protein>
<name>DFB11_RAT</name>
<proteinExistence type="inferred from homology"/>
<accession>Q32ZI0</accession>